<proteinExistence type="inferred from homology"/>
<gene>
    <name evidence="1" type="primary">rsmH</name>
    <name type="synonym">mraW</name>
    <name type="ordered locus">Bmul_2844</name>
    <name type="ordered locus">BMULJ_00394</name>
</gene>
<comment type="function">
    <text evidence="1">Specifically methylates the N4 position of cytidine in position 1402 (C1402) of 16S rRNA.</text>
</comment>
<comment type="catalytic activity">
    <reaction evidence="1">
        <text>cytidine(1402) in 16S rRNA + S-adenosyl-L-methionine = N(4)-methylcytidine(1402) in 16S rRNA + S-adenosyl-L-homocysteine + H(+)</text>
        <dbReference type="Rhea" id="RHEA:42928"/>
        <dbReference type="Rhea" id="RHEA-COMP:10286"/>
        <dbReference type="Rhea" id="RHEA-COMP:10287"/>
        <dbReference type="ChEBI" id="CHEBI:15378"/>
        <dbReference type="ChEBI" id="CHEBI:57856"/>
        <dbReference type="ChEBI" id="CHEBI:59789"/>
        <dbReference type="ChEBI" id="CHEBI:74506"/>
        <dbReference type="ChEBI" id="CHEBI:82748"/>
        <dbReference type="EC" id="2.1.1.199"/>
    </reaction>
</comment>
<comment type="subcellular location">
    <subcellularLocation>
        <location evidence="1">Cytoplasm</location>
    </subcellularLocation>
</comment>
<comment type="similarity">
    <text evidence="1">Belongs to the methyltransferase superfamily. RsmH family.</text>
</comment>
<protein>
    <recommendedName>
        <fullName evidence="1">Ribosomal RNA small subunit methyltransferase H</fullName>
        <ecNumber evidence="1">2.1.1.199</ecNumber>
    </recommendedName>
    <alternativeName>
        <fullName evidence="1">16S rRNA m(4)C1402 methyltransferase</fullName>
    </alternativeName>
    <alternativeName>
        <fullName evidence="1">rRNA (cytosine-N(4)-)-methyltransferase RsmH</fullName>
    </alternativeName>
</protein>
<name>RSMH_BURM1</name>
<accession>A9AJ24</accession>
<keyword id="KW-0963">Cytoplasm</keyword>
<keyword id="KW-0489">Methyltransferase</keyword>
<keyword id="KW-1185">Reference proteome</keyword>
<keyword id="KW-0698">rRNA processing</keyword>
<keyword id="KW-0949">S-adenosyl-L-methionine</keyword>
<keyword id="KW-0808">Transferase</keyword>
<organism>
    <name type="scientific">Burkholderia multivorans (strain ATCC 17616 / 249)</name>
    <dbReference type="NCBI Taxonomy" id="395019"/>
    <lineage>
        <taxon>Bacteria</taxon>
        <taxon>Pseudomonadati</taxon>
        <taxon>Pseudomonadota</taxon>
        <taxon>Betaproteobacteria</taxon>
        <taxon>Burkholderiales</taxon>
        <taxon>Burkholderiaceae</taxon>
        <taxon>Burkholderia</taxon>
        <taxon>Burkholderia cepacia complex</taxon>
    </lineage>
</organism>
<reference key="1">
    <citation type="submission" date="2007-10" db="EMBL/GenBank/DDBJ databases">
        <title>Complete sequence of chromosome 1 of Burkholderia multivorans ATCC 17616.</title>
        <authorList>
            <person name="Copeland A."/>
            <person name="Lucas S."/>
            <person name="Lapidus A."/>
            <person name="Barry K."/>
            <person name="Glavina del Rio T."/>
            <person name="Dalin E."/>
            <person name="Tice H."/>
            <person name="Pitluck S."/>
            <person name="Chain P."/>
            <person name="Malfatti S."/>
            <person name="Shin M."/>
            <person name="Vergez L."/>
            <person name="Schmutz J."/>
            <person name="Larimer F."/>
            <person name="Land M."/>
            <person name="Hauser L."/>
            <person name="Kyrpides N."/>
            <person name="Kim E."/>
            <person name="Tiedje J."/>
            <person name="Richardson P."/>
        </authorList>
    </citation>
    <scope>NUCLEOTIDE SEQUENCE [LARGE SCALE GENOMIC DNA]</scope>
    <source>
        <strain>ATCC 17616 / 249</strain>
    </source>
</reference>
<reference key="2">
    <citation type="submission" date="2007-04" db="EMBL/GenBank/DDBJ databases">
        <title>Complete genome sequence of Burkholderia multivorans ATCC 17616.</title>
        <authorList>
            <person name="Ohtsubo Y."/>
            <person name="Yamashita A."/>
            <person name="Kurokawa K."/>
            <person name="Takami H."/>
            <person name="Yuhara S."/>
            <person name="Nishiyama E."/>
            <person name="Endo R."/>
            <person name="Miyazaki R."/>
            <person name="Ono A."/>
            <person name="Yano K."/>
            <person name="Ito M."/>
            <person name="Sota M."/>
            <person name="Yuji N."/>
            <person name="Hattori M."/>
            <person name="Tsuda M."/>
        </authorList>
    </citation>
    <scope>NUCLEOTIDE SEQUENCE [LARGE SCALE GENOMIC DNA]</scope>
    <source>
        <strain>ATCC 17616 / 249</strain>
    </source>
</reference>
<dbReference type="EC" id="2.1.1.199" evidence="1"/>
<dbReference type="EMBL" id="CP000868">
    <property type="protein sequence ID" value="ABX16528.1"/>
    <property type="molecule type" value="Genomic_DNA"/>
</dbReference>
<dbReference type="EMBL" id="AP009385">
    <property type="protein sequence ID" value="BAG42362.1"/>
    <property type="molecule type" value="Genomic_DNA"/>
</dbReference>
<dbReference type="RefSeq" id="WP_012214191.1">
    <property type="nucleotide sequence ID" value="NC_010084.1"/>
</dbReference>
<dbReference type="SMR" id="A9AJ24"/>
<dbReference type="STRING" id="395019.BMULJ_00394"/>
<dbReference type="KEGG" id="bmj:BMULJ_00394"/>
<dbReference type="KEGG" id="bmu:Bmul_2844"/>
<dbReference type="eggNOG" id="COG0275">
    <property type="taxonomic scope" value="Bacteria"/>
</dbReference>
<dbReference type="HOGENOM" id="CLU_038422_2_0_4"/>
<dbReference type="Proteomes" id="UP000008815">
    <property type="component" value="Chromosome 1"/>
</dbReference>
<dbReference type="GO" id="GO:0005737">
    <property type="term" value="C:cytoplasm"/>
    <property type="evidence" value="ECO:0007669"/>
    <property type="project" value="UniProtKB-SubCell"/>
</dbReference>
<dbReference type="GO" id="GO:0071424">
    <property type="term" value="F:rRNA (cytosine-N4-)-methyltransferase activity"/>
    <property type="evidence" value="ECO:0007669"/>
    <property type="project" value="UniProtKB-UniRule"/>
</dbReference>
<dbReference type="GO" id="GO:0070475">
    <property type="term" value="P:rRNA base methylation"/>
    <property type="evidence" value="ECO:0007669"/>
    <property type="project" value="UniProtKB-UniRule"/>
</dbReference>
<dbReference type="Gene3D" id="1.10.150.170">
    <property type="entry name" value="Putative methyltransferase TM0872, insert domain"/>
    <property type="match status" value="1"/>
</dbReference>
<dbReference type="Gene3D" id="3.40.50.150">
    <property type="entry name" value="Vaccinia Virus protein VP39"/>
    <property type="match status" value="1"/>
</dbReference>
<dbReference type="HAMAP" id="MF_01007">
    <property type="entry name" value="16SrRNA_methyltr_H"/>
    <property type="match status" value="1"/>
</dbReference>
<dbReference type="InterPro" id="IPR002903">
    <property type="entry name" value="RsmH"/>
</dbReference>
<dbReference type="InterPro" id="IPR023397">
    <property type="entry name" value="SAM-dep_MeTrfase_MraW_recog"/>
</dbReference>
<dbReference type="InterPro" id="IPR029063">
    <property type="entry name" value="SAM-dependent_MTases_sf"/>
</dbReference>
<dbReference type="NCBIfam" id="TIGR00006">
    <property type="entry name" value="16S rRNA (cytosine(1402)-N(4))-methyltransferase RsmH"/>
    <property type="match status" value="1"/>
</dbReference>
<dbReference type="PANTHER" id="PTHR11265:SF0">
    <property type="entry name" value="12S RRNA N4-METHYLCYTIDINE METHYLTRANSFERASE"/>
    <property type="match status" value="1"/>
</dbReference>
<dbReference type="PANTHER" id="PTHR11265">
    <property type="entry name" value="S-ADENOSYL-METHYLTRANSFERASE MRAW"/>
    <property type="match status" value="1"/>
</dbReference>
<dbReference type="Pfam" id="PF01795">
    <property type="entry name" value="Methyltransf_5"/>
    <property type="match status" value="1"/>
</dbReference>
<dbReference type="PIRSF" id="PIRSF004486">
    <property type="entry name" value="MraW"/>
    <property type="match status" value="1"/>
</dbReference>
<dbReference type="SUPFAM" id="SSF81799">
    <property type="entry name" value="Putative methyltransferase TM0872, insert domain"/>
    <property type="match status" value="1"/>
</dbReference>
<dbReference type="SUPFAM" id="SSF53335">
    <property type="entry name" value="S-adenosyl-L-methionine-dependent methyltransferases"/>
    <property type="match status" value="1"/>
</dbReference>
<sequence>MGNELQHRTVLLDEAVESLVTRPDGIYVDGTFGRGGHSRAVLARLGPAGRLIAFDKDPRAIETAQGIGDARFSIVHDSFASMRDALAARGIEKVSGVLLDLGVSSPQVDDPARGFSFRADGPLDMRMDPTRGESAAEWLARASLQELTEVIRDYGEERFAFQIAKALVARRAESDRLGPLDSTGELAQIVGHVVKTREKGKDPATRTFQAIRIHVNQELADLQVVLDAALSLLEQGGRLVVISFHSLEDRIVKRFMQAHASAPAVDRRLPIRAVDLPSPPLKIIGRQFPSEAEVAANPRARSAVMRIAERLTP</sequence>
<feature type="chain" id="PRO_0000386775" description="Ribosomal RNA small subunit methyltransferase H">
    <location>
        <begin position="1"/>
        <end position="313"/>
    </location>
</feature>
<feature type="binding site" evidence="1">
    <location>
        <begin position="35"/>
        <end position="37"/>
    </location>
    <ligand>
        <name>S-adenosyl-L-methionine</name>
        <dbReference type="ChEBI" id="CHEBI:59789"/>
    </ligand>
</feature>
<feature type="binding site" evidence="1">
    <location>
        <position position="55"/>
    </location>
    <ligand>
        <name>S-adenosyl-L-methionine</name>
        <dbReference type="ChEBI" id="CHEBI:59789"/>
    </ligand>
</feature>
<feature type="binding site" evidence="1">
    <location>
        <position position="79"/>
    </location>
    <ligand>
        <name>S-adenosyl-L-methionine</name>
        <dbReference type="ChEBI" id="CHEBI:59789"/>
    </ligand>
</feature>
<feature type="binding site" evidence="1">
    <location>
        <position position="100"/>
    </location>
    <ligand>
        <name>S-adenosyl-L-methionine</name>
        <dbReference type="ChEBI" id="CHEBI:59789"/>
    </ligand>
</feature>
<feature type="binding site" evidence="1">
    <location>
        <position position="107"/>
    </location>
    <ligand>
        <name>S-adenosyl-L-methionine</name>
        <dbReference type="ChEBI" id="CHEBI:59789"/>
    </ligand>
</feature>
<evidence type="ECO:0000255" key="1">
    <source>
        <dbReference type="HAMAP-Rule" id="MF_01007"/>
    </source>
</evidence>